<gene>
    <name evidence="1" type="primary">mutS2</name>
    <name type="synonym">mutSB</name>
    <name evidence="1" type="synonym">rqcU</name>
    <name type="ordered locus">BB_0098</name>
</gene>
<accession>O51125</accession>
<feature type="chain" id="PRO_0000115218" description="Endonuclease MutS2">
    <location>
        <begin position="1"/>
        <end position="780"/>
    </location>
</feature>
<feature type="domain" description="Smr" evidence="1">
    <location>
        <begin position="706"/>
        <end position="780"/>
    </location>
</feature>
<feature type="binding site" evidence="1">
    <location>
        <begin position="334"/>
        <end position="341"/>
    </location>
    <ligand>
        <name>ATP</name>
        <dbReference type="ChEBI" id="CHEBI:30616"/>
    </ligand>
</feature>
<proteinExistence type="inferred from homology"/>
<sequence>MQDEQDKYLKNIDFYEILSLVSKYVSNPDTVNLLSNQKILKTKESLEKIFSFVSLIRMLFESCKGYPNSFINSLKYPISLLLKENSRVSIENLRDIIVFLDEVLRINLFLHKNSDIKHLNVQILSDLLFLNPELKNLLNELKEHIDVDALELKSGVVKEYDSIEFEIKNLNRRVENQIKKIISLNAEYLTSNFVCYKSNKYTLALKSNFKGKIKGNIISISSSGETFYIEPNDIVNANNRLNYLSLEKERIILKILRNLSAKVHSNIVLLDNLYNNFLYYDSLKARAIYGIKTKGVFPEISNVLNIFDAHHPLLKDSKAITFTPAENRVVIITGPNAGGKTVTLKTIGLLSAMFQFGIPIVVGESSTFKIFDNIFIDIGDEQSISNSLSTFSSHMSNISYILKHTTKDSLVIFDEFCSGTDIDQGQALAISILEYLININSYVLISTHYNALKYFAYTHEGVVNASMRMDLETMQPNYNLIFSIPGESYAFNVASKALIDRSIVIRANEIYSSQKTEINEILEKLIEKEKDLLLIKESMDKKLIQIELQEKELENFYQDLLLREKNIETKLLNEQNEFLKNSRKVLENLVREIKEGNINVAKNKAFISDLEKNVDLKTNKVNSLNNKRNVVADFKIGDKVRIVNSNAKGKIVGISKKKITVNVGAFNVSVSSSEISLENFKEKKENGKNFNFSIDYNKENLLSFTIDIRGMRSVDALDFLNKKIDNIILNGINKFEIIHGKGEGHLMREVHNLLKELKFIRKYYFAHPSDGGSGKTIVEI</sequence>
<reference key="1">
    <citation type="journal article" date="1997" name="Nature">
        <title>Genomic sequence of a Lyme disease spirochaete, Borrelia burgdorferi.</title>
        <authorList>
            <person name="Fraser C.M."/>
            <person name="Casjens S."/>
            <person name="Huang W.M."/>
            <person name="Sutton G.G."/>
            <person name="Clayton R.A."/>
            <person name="Lathigra R."/>
            <person name="White O."/>
            <person name="Ketchum K.A."/>
            <person name="Dodson R.J."/>
            <person name="Hickey E.K."/>
            <person name="Gwinn M.L."/>
            <person name="Dougherty B.A."/>
            <person name="Tomb J.-F."/>
            <person name="Fleischmann R.D."/>
            <person name="Richardson D.L."/>
            <person name="Peterson J.D."/>
            <person name="Kerlavage A.R."/>
            <person name="Quackenbush J."/>
            <person name="Salzberg S.L."/>
            <person name="Hanson M."/>
            <person name="van Vugt R."/>
            <person name="Palmer N."/>
            <person name="Adams M.D."/>
            <person name="Gocayne J.D."/>
            <person name="Weidman J.F."/>
            <person name="Utterback T.R."/>
            <person name="Watthey L."/>
            <person name="McDonald L.A."/>
            <person name="Artiach P."/>
            <person name="Bowman C."/>
            <person name="Garland S.A."/>
            <person name="Fujii C."/>
            <person name="Cotton M.D."/>
            <person name="Horst K."/>
            <person name="Roberts K.M."/>
            <person name="Hatch B."/>
            <person name="Smith H.O."/>
            <person name="Venter J.C."/>
        </authorList>
    </citation>
    <scope>NUCLEOTIDE SEQUENCE [LARGE SCALE GENOMIC DNA]</scope>
    <source>
        <strain>ATCC 35210 / DSM 4680 / CIP 102532 / B31</strain>
    </source>
</reference>
<protein>
    <recommendedName>
        <fullName evidence="1">Endonuclease MutS2</fullName>
        <ecNumber evidence="1">3.1.-.-</ecNumber>
    </recommendedName>
    <alternativeName>
        <fullName evidence="1">Ribosome-associated protein quality control-upstream factor</fullName>
        <shortName evidence="1">RQC-upstream factor</shortName>
        <shortName evidence="1">RqcU</shortName>
        <ecNumber evidence="1">3.6.4.-</ecNumber>
    </alternativeName>
</protein>
<evidence type="ECO:0000255" key="1">
    <source>
        <dbReference type="HAMAP-Rule" id="MF_00092"/>
    </source>
</evidence>
<name>MUTS2_BORBU</name>
<comment type="function">
    <text evidence="1">Endonuclease that is involved in the suppression of homologous recombination and thus may have a key role in the control of bacterial genetic diversity.</text>
</comment>
<comment type="function">
    <text evidence="1">Acts as a ribosome collision sensor, splitting the ribosome into its 2 subunits. Detects stalled/collided 70S ribosomes which it binds and splits by an ATP-hydrolysis driven conformational change. Acts upstream of the ribosome quality control system (RQC), a ribosome-associated complex that mediates the extraction of incompletely synthesized nascent chains from stalled ribosomes and their subsequent degradation. Probably generates substrates for RQC.</text>
</comment>
<comment type="subunit">
    <text evidence="1">Homodimer. Binds to stalled ribosomes, contacting rRNA.</text>
</comment>
<comment type="similarity">
    <text evidence="1">Belongs to the DNA mismatch repair MutS family. MutS2 subfamily.</text>
</comment>
<keyword id="KW-0067">ATP-binding</keyword>
<keyword id="KW-0238">DNA-binding</keyword>
<keyword id="KW-0255">Endonuclease</keyword>
<keyword id="KW-0378">Hydrolase</keyword>
<keyword id="KW-0540">Nuclease</keyword>
<keyword id="KW-0547">Nucleotide-binding</keyword>
<keyword id="KW-1185">Reference proteome</keyword>
<keyword id="KW-0694">RNA-binding</keyword>
<keyword id="KW-0699">rRNA-binding</keyword>
<dbReference type="EC" id="3.1.-.-" evidence="1"/>
<dbReference type="EC" id="3.6.4.-" evidence="1"/>
<dbReference type="EMBL" id="AE000783">
    <property type="protein sequence ID" value="AAC66481.1"/>
    <property type="molecule type" value="Genomic_DNA"/>
</dbReference>
<dbReference type="PIR" id="B70112">
    <property type="entry name" value="B70112"/>
</dbReference>
<dbReference type="RefSeq" id="NP_212232.1">
    <property type="nucleotide sequence ID" value="NC_001318.1"/>
</dbReference>
<dbReference type="RefSeq" id="WP_010889681.1">
    <property type="nucleotide sequence ID" value="NC_001318.1"/>
</dbReference>
<dbReference type="SMR" id="O51125"/>
<dbReference type="STRING" id="224326.BB_0098"/>
<dbReference type="PaxDb" id="224326-BB_0098"/>
<dbReference type="EnsemblBacteria" id="AAC66481">
    <property type="protein sequence ID" value="AAC66481"/>
    <property type="gene ID" value="BB_0098"/>
</dbReference>
<dbReference type="KEGG" id="bbu:BB_0098"/>
<dbReference type="PATRIC" id="fig|224326.49.peg.496"/>
<dbReference type="HOGENOM" id="CLU_011252_2_1_12"/>
<dbReference type="OrthoDB" id="9808166at2"/>
<dbReference type="Proteomes" id="UP000001807">
    <property type="component" value="Chromosome"/>
</dbReference>
<dbReference type="GO" id="GO:0005524">
    <property type="term" value="F:ATP binding"/>
    <property type="evidence" value="ECO:0007669"/>
    <property type="project" value="UniProtKB-UniRule"/>
</dbReference>
<dbReference type="GO" id="GO:0016887">
    <property type="term" value="F:ATP hydrolysis activity"/>
    <property type="evidence" value="ECO:0007669"/>
    <property type="project" value="InterPro"/>
</dbReference>
<dbReference type="GO" id="GO:0140664">
    <property type="term" value="F:ATP-dependent DNA damage sensor activity"/>
    <property type="evidence" value="ECO:0007669"/>
    <property type="project" value="InterPro"/>
</dbReference>
<dbReference type="GO" id="GO:0004519">
    <property type="term" value="F:endonuclease activity"/>
    <property type="evidence" value="ECO:0007669"/>
    <property type="project" value="UniProtKB-UniRule"/>
</dbReference>
<dbReference type="GO" id="GO:0030983">
    <property type="term" value="F:mismatched DNA binding"/>
    <property type="evidence" value="ECO:0007669"/>
    <property type="project" value="InterPro"/>
</dbReference>
<dbReference type="GO" id="GO:0043023">
    <property type="term" value="F:ribosomal large subunit binding"/>
    <property type="evidence" value="ECO:0007669"/>
    <property type="project" value="UniProtKB-UniRule"/>
</dbReference>
<dbReference type="GO" id="GO:0019843">
    <property type="term" value="F:rRNA binding"/>
    <property type="evidence" value="ECO:0007669"/>
    <property type="project" value="UniProtKB-UniRule"/>
</dbReference>
<dbReference type="GO" id="GO:0006298">
    <property type="term" value="P:mismatch repair"/>
    <property type="evidence" value="ECO:0007669"/>
    <property type="project" value="InterPro"/>
</dbReference>
<dbReference type="GO" id="GO:0045910">
    <property type="term" value="P:negative regulation of DNA recombination"/>
    <property type="evidence" value="ECO:0007669"/>
    <property type="project" value="InterPro"/>
</dbReference>
<dbReference type="GO" id="GO:0072344">
    <property type="term" value="P:rescue of stalled ribosome"/>
    <property type="evidence" value="ECO:0007669"/>
    <property type="project" value="UniProtKB-UniRule"/>
</dbReference>
<dbReference type="CDD" id="cd03280">
    <property type="entry name" value="ABC_MutS2"/>
    <property type="match status" value="1"/>
</dbReference>
<dbReference type="Gene3D" id="3.30.1370.110">
    <property type="match status" value="1"/>
</dbReference>
<dbReference type="Gene3D" id="3.40.50.300">
    <property type="entry name" value="P-loop containing nucleotide triphosphate hydrolases"/>
    <property type="match status" value="1"/>
</dbReference>
<dbReference type="HAMAP" id="MF_00092">
    <property type="entry name" value="MutS2"/>
    <property type="match status" value="1"/>
</dbReference>
<dbReference type="InterPro" id="IPR000432">
    <property type="entry name" value="DNA_mismatch_repair_MutS_C"/>
</dbReference>
<dbReference type="InterPro" id="IPR007696">
    <property type="entry name" value="DNA_mismatch_repair_MutS_core"/>
</dbReference>
<dbReference type="InterPro" id="IPR036187">
    <property type="entry name" value="DNA_mismatch_repair_MutS_sf"/>
</dbReference>
<dbReference type="InterPro" id="IPR046893">
    <property type="entry name" value="MSSS"/>
</dbReference>
<dbReference type="InterPro" id="IPR045076">
    <property type="entry name" value="MutS"/>
</dbReference>
<dbReference type="InterPro" id="IPR005747">
    <property type="entry name" value="MutS2"/>
</dbReference>
<dbReference type="InterPro" id="IPR027417">
    <property type="entry name" value="P-loop_NTPase"/>
</dbReference>
<dbReference type="InterPro" id="IPR002625">
    <property type="entry name" value="Smr_dom"/>
</dbReference>
<dbReference type="InterPro" id="IPR036063">
    <property type="entry name" value="Smr_dom_sf"/>
</dbReference>
<dbReference type="NCBIfam" id="TIGR01069">
    <property type="entry name" value="mutS2"/>
    <property type="match status" value="1"/>
</dbReference>
<dbReference type="PANTHER" id="PTHR48466:SF2">
    <property type="entry name" value="OS10G0509000 PROTEIN"/>
    <property type="match status" value="1"/>
</dbReference>
<dbReference type="PANTHER" id="PTHR48466">
    <property type="entry name" value="OS10G0509000 PROTEIN-RELATED"/>
    <property type="match status" value="1"/>
</dbReference>
<dbReference type="Pfam" id="PF20297">
    <property type="entry name" value="MSSS"/>
    <property type="match status" value="1"/>
</dbReference>
<dbReference type="Pfam" id="PF00488">
    <property type="entry name" value="MutS_V"/>
    <property type="match status" value="1"/>
</dbReference>
<dbReference type="Pfam" id="PF01713">
    <property type="entry name" value="Smr"/>
    <property type="match status" value="1"/>
</dbReference>
<dbReference type="PIRSF" id="PIRSF005814">
    <property type="entry name" value="MutS_YshD"/>
    <property type="match status" value="1"/>
</dbReference>
<dbReference type="SMART" id="SM00534">
    <property type="entry name" value="MUTSac"/>
    <property type="match status" value="1"/>
</dbReference>
<dbReference type="SMART" id="SM00533">
    <property type="entry name" value="MUTSd"/>
    <property type="match status" value="1"/>
</dbReference>
<dbReference type="SMART" id="SM00463">
    <property type="entry name" value="SMR"/>
    <property type="match status" value="1"/>
</dbReference>
<dbReference type="SUPFAM" id="SSF48334">
    <property type="entry name" value="DNA repair protein MutS, domain III"/>
    <property type="match status" value="1"/>
</dbReference>
<dbReference type="SUPFAM" id="SSF52540">
    <property type="entry name" value="P-loop containing nucleoside triphosphate hydrolases"/>
    <property type="match status" value="1"/>
</dbReference>
<dbReference type="SUPFAM" id="SSF160443">
    <property type="entry name" value="SMR domain-like"/>
    <property type="match status" value="1"/>
</dbReference>
<dbReference type="PROSITE" id="PS00486">
    <property type="entry name" value="DNA_MISMATCH_REPAIR_2"/>
    <property type="match status" value="1"/>
</dbReference>
<dbReference type="PROSITE" id="PS50828">
    <property type="entry name" value="SMR"/>
    <property type="match status" value="1"/>
</dbReference>
<organism>
    <name type="scientific">Borreliella burgdorferi (strain ATCC 35210 / DSM 4680 / CIP 102532 / B31)</name>
    <name type="common">Borrelia burgdorferi</name>
    <dbReference type="NCBI Taxonomy" id="224326"/>
    <lineage>
        <taxon>Bacteria</taxon>
        <taxon>Pseudomonadati</taxon>
        <taxon>Spirochaetota</taxon>
        <taxon>Spirochaetia</taxon>
        <taxon>Spirochaetales</taxon>
        <taxon>Borreliaceae</taxon>
        <taxon>Borreliella</taxon>
    </lineage>
</organism>